<feature type="chain" id="PRO_0000404146" description="Bidirectional sugar transporter SWEET7c">
    <location>
        <begin position="1"/>
        <end position="240"/>
    </location>
</feature>
<feature type="topological domain" description="Extracellular" evidence="2">
    <location>
        <begin position="1"/>
        <end position="12"/>
    </location>
</feature>
<feature type="transmembrane region" description="Helical; Name=1" evidence="2">
    <location>
        <begin position="13"/>
        <end position="33"/>
    </location>
</feature>
<feature type="topological domain" description="Cytoplasmic" evidence="2">
    <location>
        <begin position="34"/>
        <end position="46"/>
    </location>
</feature>
<feature type="transmembrane region" description="Helical; Name=2" evidence="2">
    <location>
        <begin position="47"/>
        <end position="67"/>
    </location>
</feature>
<feature type="topological domain" description="Extracellular" evidence="2">
    <location>
        <begin position="68"/>
        <end position="78"/>
    </location>
</feature>
<feature type="transmembrane region" description="Helical; Name=3" evidence="2">
    <location>
        <begin position="79"/>
        <end position="99"/>
    </location>
</feature>
<feature type="topological domain" description="Cytoplasmic" evidence="2">
    <location>
        <begin position="100"/>
        <end position="108"/>
    </location>
</feature>
<feature type="transmembrane region" description="Helical; Name=4" evidence="2">
    <location>
        <begin position="109"/>
        <end position="129"/>
    </location>
</feature>
<feature type="topological domain" description="Extracellular" evidence="2">
    <location>
        <begin position="130"/>
        <end position="140"/>
    </location>
</feature>
<feature type="transmembrane region" description="Helical; Name=5" evidence="2">
    <location>
        <begin position="141"/>
        <end position="161"/>
    </location>
</feature>
<feature type="topological domain" description="Cytoplasmic" evidence="2">
    <location>
        <begin position="162"/>
        <end position="164"/>
    </location>
</feature>
<feature type="transmembrane region" description="Helical; Name=6" evidence="2">
    <location>
        <begin position="165"/>
        <end position="185"/>
    </location>
</feature>
<feature type="topological domain" description="Extracellular" evidence="2">
    <location>
        <begin position="186"/>
        <end position="240"/>
    </location>
</feature>
<feature type="domain" description="MtN3/slv 1">
    <location>
        <begin position="10"/>
        <end position="48"/>
    </location>
</feature>
<feature type="domain" description="MtN3/slv 2">
    <location>
        <begin position="110"/>
        <end position="191"/>
    </location>
</feature>
<feature type="glycosylation site" description="N-linked (GlcNAc...) asparagine" evidence="2">
    <location>
        <position position="225"/>
    </location>
</feature>
<feature type="glycosylation site" description="N-linked (GlcNAc...) asparagine" evidence="2">
    <location>
        <position position="235"/>
    </location>
</feature>
<gene>
    <name type="primary">SWEET7C</name>
    <name type="ORF">OsI_37675</name>
</gene>
<evidence type="ECO:0000250" key="1">
    <source>
        <dbReference type="UniProtKB" id="Q8L9J7"/>
    </source>
</evidence>
<evidence type="ECO:0000255" key="2"/>
<evidence type="ECO:0000305" key="3"/>
<keyword id="KW-1003">Cell membrane</keyword>
<keyword id="KW-0325">Glycoprotein</keyword>
<keyword id="KW-0472">Membrane</keyword>
<keyword id="KW-1185">Reference proteome</keyword>
<keyword id="KW-0677">Repeat</keyword>
<keyword id="KW-0762">Sugar transport</keyword>
<keyword id="KW-0812">Transmembrane</keyword>
<keyword id="KW-1133">Transmembrane helix</keyword>
<keyword id="KW-0813">Transport</keyword>
<reference key="1">
    <citation type="journal article" date="2005" name="PLoS Biol.">
        <title>The genomes of Oryza sativa: a history of duplications.</title>
        <authorList>
            <person name="Yu J."/>
            <person name="Wang J."/>
            <person name="Lin W."/>
            <person name="Li S."/>
            <person name="Li H."/>
            <person name="Zhou J."/>
            <person name="Ni P."/>
            <person name="Dong W."/>
            <person name="Hu S."/>
            <person name="Zeng C."/>
            <person name="Zhang J."/>
            <person name="Zhang Y."/>
            <person name="Li R."/>
            <person name="Xu Z."/>
            <person name="Li S."/>
            <person name="Li X."/>
            <person name="Zheng H."/>
            <person name="Cong L."/>
            <person name="Lin L."/>
            <person name="Yin J."/>
            <person name="Geng J."/>
            <person name="Li G."/>
            <person name="Shi J."/>
            <person name="Liu J."/>
            <person name="Lv H."/>
            <person name="Li J."/>
            <person name="Wang J."/>
            <person name="Deng Y."/>
            <person name="Ran L."/>
            <person name="Shi X."/>
            <person name="Wang X."/>
            <person name="Wu Q."/>
            <person name="Li C."/>
            <person name="Ren X."/>
            <person name="Wang J."/>
            <person name="Wang X."/>
            <person name="Li D."/>
            <person name="Liu D."/>
            <person name="Zhang X."/>
            <person name="Ji Z."/>
            <person name="Zhao W."/>
            <person name="Sun Y."/>
            <person name="Zhang Z."/>
            <person name="Bao J."/>
            <person name="Han Y."/>
            <person name="Dong L."/>
            <person name="Ji J."/>
            <person name="Chen P."/>
            <person name="Wu S."/>
            <person name="Liu J."/>
            <person name="Xiao Y."/>
            <person name="Bu D."/>
            <person name="Tan J."/>
            <person name="Yang L."/>
            <person name="Ye C."/>
            <person name="Zhang J."/>
            <person name="Xu J."/>
            <person name="Zhou Y."/>
            <person name="Yu Y."/>
            <person name="Zhang B."/>
            <person name="Zhuang S."/>
            <person name="Wei H."/>
            <person name="Liu B."/>
            <person name="Lei M."/>
            <person name="Yu H."/>
            <person name="Li Y."/>
            <person name="Xu H."/>
            <person name="Wei S."/>
            <person name="He X."/>
            <person name="Fang L."/>
            <person name="Zhang Z."/>
            <person name="Zhang Y."/>
            <person name="Huang X."/>
            <person name="Su Z."/>
            <person name="Tong W."/>
            <person name="Li J."/>
            <person name="Tong Z."/>
            <person name="Li S."/>
            <person name="Ye J."/>
            <person name="Wang L."/>
            <person name="Fang L."/>
            <person name="Lei T."/>
            <person name="Chen C.-S."/>
            <person name="Chen H.-C."/>
            <person name="Xu Z."/>
            <person name="Li H."/>
            <person name="Huang H."/>
            <person name="Zhang F."/>
            <person name="Xu H."/>
            <person name="Li N."/>
            <person name="Zhao C."/>
            <person name="Li S."/>
            <person name="Dong L."/>
            <person name="Huang Y."/>
            <person name="Li L."/>
            <person name="Xi Y."/>
            <person name="Qi Q."/>
            <person name="Li W."/>
            <person name="Zhang B."/>
            <person name="Hu W."/>
            <person name="Zhang Y."/>
            <person name="Tian X."/>
            <person name="Jiao Y."/>
            <person name="Liang X."/>
            <person name="Jin J."/>
            <person name="Gao L."/>
            <person name="Zheng W."/>
            <person name="Hao B."/>
            <person name="Liu S.-M."/>
            <person name="Wang W."/>
            <person name="Yuan L."/>
            <person name="Cao M."/>
            <person name="McDermott J."/>
            <person name="Samudrala R."/>
            <person name="Wang J."/>
            <person name="Wong G.K.-S."/>
            <person name="Yang H."/>
        </authorList>
    </citation>
    <scope>NUCLEOTIDE SEQUENCE [LARGE SCALE GENOMIC DNA]</scope>
    <source>
        <strain>cv. 93-11</strain>
    </source>
</reference>
<protein>
    <recommendedName>
        <fullName>Bidirectional sugar transporter SWEET7c</fullName>
        <shortName>OsSWEET7c</shortName>
    </recommendedName>
</protein>
<comment type="function">
    <text evidence="1">Mediates both low-affinity uptake and efflux of sugar across the plasma membrane.</text>
</comment>
<comment type="subunit">
    <text evidence="1">Forms homooligomers and/or heterooligomers.</text>
</comment>
<comment type="subcellular location">
    <subcellularLocation>
        <location evidence="1">Cell membrane</location>
        <topology evidence="1">Multi-pass membrane protein</topology>
    </subcellularLocation>
</comment>
<comment type="similarity">
    <text evidence="3">Belongs to the SWEET sugar transporter family.</text>
</comment>
<sequence length="240" mass="26358">MVSPDLIRNVVGIVGNVISFGLFLSPVPIFWWIIKNKNVQNFKADPILVVTINGISLVIEAVYLTIFFLFSDKKNKKKMGVVLATEALFMAAVAVGVLLGAHTHQRRSLIVGILCVIFGTIMYSSPLTIMVVKTKSVEYMPLLLSVVSFLNGLCWTLYALIRFDIFITIPNGLGVLFAIMQLILYAIYYRTTPKKQDKNLELPTVAPIAKDTSIVAPVGNDDDVNGSTASHATINITIEP</sequence>
<proteinExistence type="inferred from homology"/>
<name>SWT7C_ORYSI</name>
<accession>A2ZIM4</accession>
<organism>
    <name type="scientific">Oryza sativa subsp. indica</name>
    <name type="common">Rice</name>
    <dbReference type="NCBI Taxonomy" id="39946"/>
    <lineage>
        <taxon>Eukaryota</taxon>
        <taxon>Viridiplantae</taxon>
        <taxon>Streptophyta</taxon>
        <taxon>Embryophyta</taxon>
        <taxon>Tracheophyta</taxon>
        <taxon>Spermatophyta</taxon>
        <taxon>Magnoliopsida</taxon>
        <taxon>Liliopsida</taxon>
        <taxon>Poales</taxon>
        <taxon>Poaceae</taxon>
        <taxon>BOP clade</taxon>
        <taxon>Oryzoideae</taxon>
        <taxon>Oryzeae</taxon>
        <taxon>Oryzinae</taxon>
        <taxon>Oryza</taxon>
        <taxon>Oryza sativa</taxon>
    </lineage>
</organism>
<dbReference type="EMBL" id="CM000137">
    <property type="protein sequence ID" value="EAY82458.1"/>
    <property type="molecule type" value="Genomic_DNA"/>
</dbReference>
<dbReference type="SMR" id="A2ZIM4"/>
<dbReference type="GlyCosmos" id="A2ZIM4">
    <property type="glycosylation" value="2 sites, No reported glycans"/>
</dbReference>
<dbReference type="EnsemblPlants" id="BGIOSGA037095-TA">
    <property type="protein sequence ID" value="BGIOSGA037095-PA"/>
    <property type="gene ID" value="BGIOSGA037095"/>
</dbReference>
<dbReference type="EnsemblPlants" id="OsGoSa_12g0005370.01">
    <property type="protein sequence ID" value="OsGoSa_12g0005370.01"/>
    <property type="gene ID" value="OsGoSa_12g0005370"/>
</dbReference>
<dbReference type="EnsemblPlants" id="OsIR64_12g0005350.01">
    <property type="protein sequence ID" value="OsIR64_12g0005350.01"/>
    <property type="gene ID" value="OsIR64_12g0005350"/>
</dbReference>
<dbReference type="EnsemblPlants" id="OsKYG_12g0005430.01">
    <property type="protein sequence ID" value="OsKYG_12g0005430.01"/>
    <property type="gene ID" value="OsKYG_12g0005430"/>
</dbReference>
<dbReference type="EnsemblPlants" id="OsLiXu_12g0005340.01">
    <property type="protein sequence ID" value="OsLiXu_12g0005340.01"/>
    <property type="gene ID" value="OsLiXu_12g0005340"/>
</dbReference>
<dbReference type="EnsemblPlants" id="OsMH63_12G005470_01">
    <property type="protein sequence ID" value="OsMH63_12G005470_01"/>
    <property type="gene ID" value="OsMH63_12G005470"/>
</dbReference>
<dbReference type="EnsemblPlants" id="OsPr106_12g0005370.01">
    <property type="protein sequence ID" value="OsPr106_12g0005370.01"/>
    <property type="gene ID" value="OsPr106_12g0005370"/>
</dbReference>
<dbReference type="EnsemblPlants" id="OsZS97_12G005360_01">
    <property type="protein sequence ID" value="OsZS97_12G005360_01"/>
    <property type="gene ID" value="OsZS97_12G005360"/>
</dbReference>
<dbReference type="Gramene" id="BGIOSGA037095-TA">
    <property type="protein sequence ID" value="BGIOSGA037095-PA"/>
    <property type="gene ID" value="BGIOSGA037095"/>
</dbReference>
<dbReference type="Gramene" id="OsGoSa_12g0005370.01">
    <property type="protein sequence ID" value="OsGoSa_12g0005370.01"/>
    <property type="gene ID" value="OsGoSa_12g0005370"/>
</dbReference>
<dbReference type="Gramene" id="OsIR64_12g0005350.01">
    <property type="protein sequence ID" value="OsIR64_12g0005350.01"/>
    <property type="gene ID" value="OsIR64_12g0005350"/>
</dbReference>
<dbReference type="Gramene" id="OsKYG_12g0005430.01">
    <property type="protein sequence ID" value="OsKYG_12g0005430.01"/>
    <property type="gene ID" value="OsKYG_12g0005430"/>
</dbReference>
<dbReference type="Gramene" id="OsLiXu_12g0005340.01">
    <property type="protein sequence ID" value="OsLiXu_12g0005340.01"/>
    <property type="gene ID" value="OsLiXu_12g0005340"/>
</dbReference>
<dbReference type="Gramene" id="OsMH63_12G005470_01">
    <property type="protein sequence ID" value="OsMH63_12G005470_01"/>
    <property type="gene ID" value="OsMH63_12G005470"/>
</dbReference>
<dbReference type="Gramene" id="OsPr106_12g0005370.01">
    <property type="protein sequence ID" value="OsPr106_12g0005370.01"/>
    <property type="gene ID" value="OsPr106_12g0005370"/>
</dbReference>
<dbReference type="Gramene" id="OsZS97_12G005360_01">
    <property type="protein sequence ID" value="OsZS97_12G005360_01"/>
    <property type="gene ID" value="OsZS97_12G005360"/>
</dbReference>
<dbReference type="HOGENOM" id="CLU_048643_1_0_1"/>
<dbReference type="OMA" id="TINGACW"/>
<dbReference type="OrthoDB" id="409725at2759"/>
<dbReference type="Proteomes" id="UP000007015">
    <property type="component" value="Chromosome 12"/>
</dbReference>
<dbReference type="GO" id="GO:0005886">
    <property type="term" value="C:plasma membrane"/>
    <property type="evidence" value="ECO:0000250"/>
    <property type="project" value="UniProtKB"/>
</dbReference>
<dbReference type="GO" id="GO:0051119">
    <property type="term" value="F:sugar transmembrane transporter activity"/>
    <property type="evidence" value="ECO:0000250"/>
    <property type="project" value="UniProtKB"/>
</dbReference>
<dbReference type="FunFam" id="1.20.1280.290:FF:000002">
    <property type="entry name" value="Bidirectional sugar transporter SWEET"/>
    <property type="match status" value="1"/>
</dbReference>
<dbReference type="Gene3D" id="1.20.1280.290">
    <property type="match status" value="2"/>
</dbReference>
<dbReference type="InterPro" id="IPR036259">
    <property type="entry name" value="MFS_trans_sf"/>
</dbReference>
<dbReference type="InterPro" id="IPR047664">
    <property type="entry name" value="SWEET"/>
</dbReference>
<dbReference type="InterPro" id="IPR004316">
    <property type="entry name" value="SWEET_rpt"/>
</dbReference>
<dbReference type="PANTHER" id="PTHR10791">
    <property type="entry name" value="RAG1-ACTIVATING PROTEIN 1"/>
    <property type="match status" value="1"/>
</dbReference>
<dbReference type="PANTHER" id="PTHR10791:SF30">
    <property type="entry name" value="SUGAR TRANSPORTER SWEET1"/>
    <property type="match status" value="1"/>
</dbReference>
<dbReference type="Pfam" id="PF03083">
    <property type="entry name" value="MtN3_slv"/>
    <property type="match status" value="2"/>
</dbReference>
<dbReference type="SUPFAM" id="SSF103473">
    <property type="entry name" value="MFS general substrate transporter"/>
    <property type="match status" value="1"/>
</dbReference>